<organism>
    <name type="scientific">Roseobacter denitrificans (strain ATCC 33942 / OCh 114)</name>
    <name type="common">Erythrobacter sp. (strain OCh 114)</name>
    <name type="synonym">Roseobacter denitrificans</name>
    <dbReference type="NCBI Taxonomy" id="375451"/>
    <lineage>
        <taxon>Bacteria</taxon>
        <taxon>Pseudomonadati</taxon>
        <taxon>Pseudomonadota</taxon>
        <taxon>Alphaproteobacteria</taxon>
        <taxon>Rhodobacterales</taxon>
        <taxon>Roseobacteraceae</taxon>
        <taxon>Roseobacter</taxon>
    </lineage>
</organism>
<accession>Q160Y1</accession>
<evidence type="ECO:0000250" key="1"/>
<evidence type="ECO:0000255" key="2">
    <source>
        <dbReference type="HAMAP-Rule" id="MF_00403"/>
    </source>
</evidence>
<evidence type="ECO:0000256" key="3">
    <source>
        <dbReference type="SAM" id="MobiDB-lite"/>
    </source>
</evidence>
<evidence type="ECO:0000305" key="4"/>
<sequence length="123" mass="14167">MPTIQQLIRKPRQPKIKRSKSMHLQECPQKRGVCTRVYTTTPKKPNSAMRKVAKVRLTNGFEVISYIPGESHNLQEHSVVLIRGGRVKDLPGVRYHILRGVLDTQGVKDRKQRRSKYGAKRPK</sequence>
<feature type="chain" id="PRO_0000263586" description="Small ribosomal subunit protein uS12">
    <location>
        <begin position="1"/>
        <end position="123"/>
    </location>
</feature>
<feature type="region of interest" description="Disordered" evidence="3">
    <location>
        <begin position="1"/>
        <end position="27"/>
    </location>
</feature>
<feature type="compositionally biased region" description="Basic residues" evidence="3">
    <location>
        <begin position="9"/>
        <end position="21"/>
    </location>
</feature>
<feature type="modified residue" description="3-methylthioaspartic acid" evidence="1">
    <location>
        <position position="89"/>
    </location>
</feature>
<gene>
    <name evidence="2" type="primary">rpsL</name>
    <name type="ordered locus">RD1_4015</name>
</gene>
<comment type="function">
    <text evidence="2">With S4 and S5 plays an important role in translational accuracy.</text>
</comment>
<comment type="function">
    <text evidence="2">Interacts with and stabilizes bases of the 16S rRNA that are involved in tRNA selection in the A site and with the mRNA backbone. Located at the interface of the 30S and 50S subunits, it traverses the body of the 30S subunit contacting proteins on the other side and probably holding the rRNA structure together. The combined cluster of proteins S8, S12 and S17 appears to hold together the shoulder and platform of the 30S subunit.</text>
</comment>
<comment type="subunit">
    <text evidence="2">Part of the 30S ribosomal subunit. Contacts proteins S8 and S17. May interact with IF1 in the 30S initiation complex.</text>
</comment>
<comment type="similarity">
    <text evidence="2">Belongs to the universal ribosomal protein uS12 family.</text>
</comment>
<proteinExistence type="inferred from homology"/>
<name>RS12_ROSDO</name>
<reference key="1">
    <citation type="journal article" date="2007" name="J. Bacteriol.">
        <title>The complete genome sequence of Roseobacter denitrificans reveals a mixotrophic rather than photosynthetic metabolism.</title>
        <authorList>
            <person name="Swingley W.D."/>
            <person name="Sadekar S."/>
            <person name="Mastrian S.D."/>
            <person name="Matthies H.J."/>
            <person name="Hao J."/>
            <person name="Ramos H."/>
            <person name="Acharya C.R."/>
            <person name="Conrad A.L."/>
            <person name="Taylor H.L."/>
            <person name="Dejesa L.C."/>
            <person name="Shah M.K."/>
            <person name="O'Huallachain M.E."/>
            <person name="Lince M.T."/>
            <person name="Blankenship R.E."/>
            <person name="Beatty J.T."/>
            <person name="Touchman J.W."/>
        </authorList>
    </citation>
    <scope>NUCLEOTIDE SEQUENCE [LARGE SCALE GENOMIC DNA]</scope>
    <source>
        <strain>ATCC 33942 / OCh 114</strain>
    </source>
</reference>
<protein>
    <recommendedName>
        <fullName evidence="2">Small ribosomal subunit protein uS12</fullName>
    </recommendedName>
    <alternativeName>
        <fullName evidence="4">30S ribosomal protein S12</fullName>
    </alternativeName>
</protein>
<keyword id="KW-0488">Methylation</keyword>
<keyword id="KW-1185">Reference proteome</keyword>
<keyword id="KW-0687">Ribonucleoprotein</keyword>
<keyword id="KW-0689">Ribosomal protein</keyword>
<keyword id="KW-0694">RNA-binding</keyword>
<keyword id="KW-0699">rRNA-binding</keyword>
<keyword id="KW-0820">tRNA-binding</keyword>
<dbReference type="EMBL" id="CP000362">
    <property type="protein sequence ID" value="ABG33462.1"/>
    <property type="molecule type" value="Genomic_DNA"/>
</dbReference>
<dbReference type="RefSeq" id="WP_011570072.1">
    <property type="nucleotide sequence ID" value="NZ_FOOO01000006.1"/>
</dbReference>
<dbReference type="SMR" id="Q160Y1"/>
<dbReference type="STRING" id="375451.RD1_4015"/>
<dbReference type="GeneID" id="72438909"/>
<dbReference type="KEGG" id="rde:RD1_4015"/>
<dbReference type="eggNOG" id="COG0048">
    <property type="taxonomic scope" value="Bacteria"/>
</dbReference>
<dbReference type="HOGENOM" id="CLU_104295_1_2_5"/>
<dbReference type="OrthoDB" id="9802366at2"/>
<dbReference type="Proteomes" id="UP000007029">
    <property type="component" value="Chromosome"/>
</dbReference>
<dbReference type="GO" id="GO:0015935">
    <property type="term" value="C:small ribosomal subunit"/>
    <property type="evidence" value="ECO:0007669"/>
    <property type="project" value="InterPro"/>
</dbReference>
<dbReference type="GO" id="GO:0019843">
    <property type="term" value="F:rRNA binding"/>
    <property type="evidence" value="ECO:0007669"/>
    <property type="project" value="UniProtKB-UniRule"/>
</dbReference>
<dbReference type="GO" id="GO:0003735">
    <property type="term" value="F:structural constituent of ribosome"/>
    <property type="evidence" value="ECO:0007669"/>
    <property type="project" value="InterPro"/>
</dbReference>
<dbReference type="GO" id="GO:0000049">
    <property type="term" value="F:tRNA binding"/>
    <property type="evidence" value="ECO:0007669"/>
    <property type="project" value="UniProtKB-UniRule"/>
</dbReference>
<dbReference type="GO" id="GO:0006412">
    <property type="term" value="P:translation"/>
    <property type="evidence" value="ECO:0007669"/>
    <property type="project" value="UniProtKB-UniRule"/>
</dbReference>
<dbReference type="CDD" id="cd03368">
    <property type="entry name" value="Ribosomal_S12"/>
    <property type="match status" value="1"/>
</dbReference>
<dbReference type="FunFam" id="2.40.50.140:FF:000001">
    <property type="entry name" value="30S ribosomal protein S12"/>
    <property type="match status" value="1"/>
</dbReference>
<dbReference type="Gene3D" id="2.40.50.140">
    <property type="entry name" value="Nucleic acid-binding proteins"/>
    <property type="match status" value="1"/>
</dbReference>
<dbReference type="HAMAP" id="MF_00403_B">
    <property type="entry name" value="Ribosomal_uS12_B"/>
    <property type="match status" value="1"/>
</dbReference>
<dbReference type="InterPro" id="IPR012340">
    <property type="entry name" value="NA-bd_OB-fold"/>
</dbReference>
<dbReference type="InterPro" id="IPR006032">
    <property type="entry name" value="Ribosomal_uS12"/>
</dbReference>
<dbReference type="InterPro" id="IPR005679">
    <property type="entry name" value="Ribosomal_uS12_bac"/>
</dbReference>
<dbReference type="NCBIfam" id="TIGR00981">
    <property type="entry name" value="rpsL_bact"/>
    <property type="match status" value="1"/>
</dbReference>
<dbReference type="PANTHER" id="PTHR11652">
    <property type="entry name" value="30S RIBOSOMAL PROTEIN S12 FAMILY MEMBER"/>
    <property type="match status" value="1"/>
</dbReference>
<dbReference type="Pfam" id="PF00164">
    <property type="entry name" value="Ribosom_S12_S23"/>
    <property type="match status" value="1"/>
</dbReference>
<dbReference type="PIRSF" id="PIRSF002133">
    <property type="entry name" value="Ribosomal_S12/S23"/>
    <property type="match status" value="1"/>
</dbReference>
<dbReference type="PRINTS" id="PR01034">
    <property type="entry name" value="RIBOSOMALS12"/>
</dbReference>
<dbReference type="SUPFAM" id="SSF50249">
    <property type="entry name" value="Nucleic acid-binding proteins"/>
    <property type="match status" value="1"/>
</dbReference>
<dbReference type="PROSITE" id="PS00055">
    <property type="entry name" value="RIBOSOMAL_S12"/>
    <property type="match status" value="1"/>
</dbReference>